<organism>
    <name type="scientific">Antirrhinum majus</name>
    <name type="common">Garden snapdragon</name>
    <dbReference type="NCBI Taxonomy" id="4151"/>
    <lineage>
        <taxon>Eukaryota</taxon>
        <taxon>Viridiplantae</taxon>
        <taxon>Streptophyta</taxon>
        <taxon>Embryophyta</taxon>
        <taxon>Tracheophyta</taxon>
        <taxon>Spermatophyta</taxon>
        <taxon>Magnoliopsida</taxon>
        <taxon>eudicotyledons</taxon>
        <taxon>Gunneridae</taxon>
        <taxon>Pentapetalae</taxon>
        <taxon>asterids</taxon>
        <taxon>lamiids</taxon>
        <taxon>Lamiales</taxon>
        <taxon>Plantaginaceae</taxon>
        <taxon>Antirrhineae</taxon>
        <taxon>Antirrhinum</taxon>
    </lineage>
</organism>
<proteinExistence type="evidence at transcript level"/>
<name>SBP1_ANTMA</name>
<evidence type="ECO:0000250" key="1"/>
<evidence type="ECO:0000255" key="2"/>
<evidence type="ECO:0000255" key="3">
    <source>
        <dbReference type="PROSITE-ProRule" id="PRU00470"/>
    </source>
</evidence>
<evidence type="ECO:0000256" key="4">
    <source>
        <dbReference type="SAM" id="MobiDB-lite"/>
    </source>
</evidence>
<dbReference type="EMBL" id="X92369">
    <property type="protein sequence ID" value="CAA63113.1"/>
    <property type="molecule type" value="mRNA"/>
</dbReference>
<dbReference type="PIR" id="S62360">
    <property type="entry name" value="S62360"/>
</dbReference>
<dbReference type="SMR" id="Q38741"/>
<dbReference type="GO" id="GO:0005634">
    <property type="term" value="C:nucleus"/>
    <property type="evidence" value="ECO:0007669"/>
    <property type="project" value="UniProtKB-SubCell"/>
</dbReference>
<dbReference type="GO" id="GO:0003677">
    <property type="term" value="F:DNA binding"/>
    <property type="evidence" value="ECO:0007669"/>
    <property type="project" value="UniProtKB-KW"/>
</dbReference>
<dbReference type="GO" id="GO:0003700">
    <property type="term" value="F:DNA-binding transcription factor activity"/>
    <property type="evidence" value="ECO:0007669"/>
    <property type="project" value="InterPro"/>
</dbReference>
<dbReference type="GO" id="GO:0008270">
    <property type="term" value="F:zinc ion binding"/>
    <property type="evidence" value="ECO:0007669"/>
    <property type="project" value="UniProtKB-KW"/>
</dbReference>
<dbReference type="GO" id="GO:0009908">
    <property type="term" value="P:flower development"/>
    <property type="evidence" value="ECO:0007669"/>
    <property type="project" value="InterPro"/>
</dbReference>
<dbReference type="FunFam" id="4.10.1100.10:FF:000001">
    <property type="entry name" value="Squamosa promoter-binding-like protein 14"/>
    <property type="match status" value="1"/>
</dbReference>
<dbReference type="Gene3D" id="4.10.1100.10">
    <property type="entry name" value="Transcription factor, SBP-box domain"/>
    <property type="match status" value="1"/>
</dbReference>
<dbReference type="InterPro" id="IPR044817">
    <property type="entry name" value="SBP-like"/>
</dbReference>
<dbReference type="InterPro" id="IPR004333">
    <property type="entry name" value="SBP_dom"/>
</dbReference>
<dbReference type="InterPro" id="IPR017238">
    <property type="entry name" value="SBP_fam"/>
</dbReference>
<dbReference type="InterPro" id="IPR036893">
    <property type="entry name" value="SBP_sf"/>
</dbReference>
<dbReference type="PANTHER" id="PTHR31251">
    <property type="entry name" value="SQUAMOSA PROMOTER-BINDING-LIKE PROTEIN 4"/>
    <property type="match status" value="1"/>
</dbReference>
<dbReference type="PANTHER" id="PTHR31251:SF106">
    <property type="entry name" value="SQUAMOSA PROMOTER-BINDING-LIKE PROTEIN 4"/>
    <property type="match status" value="1"/>
</dbReference>
<dbReference type="Pfam" id="PF03110">
    <property type="entry name" value="SBP"/>
    <property type="match status" value="1"/>
</dbReference>
<dbReference type="PIRSF" id="PIRSF037575">
    <property type="entry name" value="SBP"/>
    <property type="match status" value="1"/>
</dbReference>
<dbReference type="SUPFAM" id="SSF103612">
    <property type="entry name" value="SBT domain"/>
    <property type="match status" value="1"/>
</dbReference>
<dbReference type="PROSITE" id="PS51141">
    <property type="entry name" value="ZF_SBP"/>
    <property type="match status" value="1"/>
</dbReference>
<protein>
    <recommendedName>
        <fullName>Squamosa promoter-binding protein 1</fullName>
    </recommendedName>
</protein>
<accession>Q38741</accession>
<gene>
    <name type="primary">SBP1</name>
</gene>
<keyword id="KW-0238">DNA-binding</keyword>
<keyword id="KW-0479">Metal-binding</keyword>
<keyword id="KW-0539">Nucleus</keyword>
<keyword id="KW-0804">Transcription</keyword>
<keyword id="KW-0805">Transcription regulation</keyword>
<keyword id="KW-0862">Zinc</keyword>
<keyword id="KW-0863">Zinc-finger</keyword>
<feature type="chain" id="PRO_0000132720" description="Squamosa promoter-binding protein 1">
    <location>
        <begin position="1"/>
        <end position="131"/>
    </location>
</feature>
<feature type="zinc finger region" description="SBP-type" evidence="3">
    <location>
        <begin position="49"/>
        <end position="126"/>
    </location>
</feature>
<feature type="region of interest" description="Disordered" evidence="4">
    <location>
        <begin position="1"/>
        <end position="52"/>
    </location>
</feature>
<feature type="short sequence motif" description="Bipartite nuclear localization signal" evidence="2">
    <location>
        <begin position="109"/>
        <end position="125"/>
    </location>
</feature>
<feature type="compositionally biased region" description="Basic and acidic residues" evidence="4">
    <location>
        <begin position="1"/>
        <end position="10"/>
    </location>
</feature>
<feature type="binding site" evidence="3">
    <location>
        <position position="52"/>
    </location>
    <ligand>
        <name>Zn(2+)</name>
        <dbReference type="ChEBI" id="CHEBI:29105"/>
        <label>1</label>
    </ligand>
</feature>
<feature type="binding site" evidence="3">
    <location>
        <position position="57"/>
    </location>
    <ligand>
        <name>Zn(2+)</name>
        <dbReference type="ChEBI" id="CHEBI:29105"/>
        <label>1</label>
    </ligand>
</feature>
<feature type="binding site" evidence="3">
    <location>
        <position position="74"/>
    </location>
    <ligand>
        <name>Zn(2+)</name>
        <dbReference type="ChEBI" id="CHEBI:29105"/>
        <label>1</label>
    </ligand>
</feature>
<feature type="binding site" evidence="3">
    <location>
        <position position="77"/>
    </location>
    <ligand>
        <name>Zn(2+)</name>
        <dbReference type="ChEBI" id="CHEBI:29105"/>
        <label>1</label>
    </ligand>
</feature>
<feature type="binding site" evidence="3">
    <location>
        <position position="93"/>
    </location>
    <ligand>
        <name>Zn(2+)</name>
        <dbReference type="ChEBI" id="CHEBI:29105"/>
        <label>2</label>
    </ligand>
</feature>
<feature type="binding site" evidence="3">
    <location>
        <position position="96"/>
    </location>
    <ligand>
        <name>Zn(2+)</name>
        <dbReference type="ChEBI" id="CHEBI:29105"/>
        <label>2</label>
    </ligand>
</feature>
<feature type="binding site" evidence="3">
    <location>
        <position position="100"/>
    </location>
    <ligand>
        <name>Zn(2+)</name>
        <dbReference type="ChEBI" id="CHEBI:29105"/>
        <label>2</label>
    </ligand>
</feature>
<feature type="binding site" evidence="3">
    <location>
        <position position="112"/>
    </location>
    <ligand>
        <name>Zn(2+)</name>
        <dbReference type="ChEBI" id="CHEBI:29105"/>
        <label>2</label>
    </ligand>
</feature>
<reference key="1">
    <citation type="journal article" date="1996" name="Mol. Gen. Genet.">
        <title>A new family of DNA binding proteins includes putative transcriptional regulators of the Antirrhinum majus floral meristem identity gene SQUAMOSA.</title>
        <authorList>
            <person name="Klein J."/>
            <person name="Saedler H."/>
            <person name="Huijser P."/>
        </authorList>
    </citation>
    <scope>NUCLEOTIDE SEQUENCE [MRNA]</scope>
    <source>
        <strain>cv. Snowman</strain>
    </source>
</reference>
<sequence>MDTSKGEGKRVIKLPGSQEQGEEEDDIGEDSKKTRALTPSGKRASGSTQRSCQVENCAAEMTNAKPYHRRHKVCEFHAKAPVVLHSGLQQRFCQQCSRFHELSEFDEAKRSCRRRLAGHNERRRKSSHDTH</sequence>
<comment type="function">
    <text>Probable transcriptional factor. Binds to the promoter of the SQUAMOSA gene.</text>
</comment>
<comment type="subcellular location">
    <subcellularLocation>
        <location>Nucleus</location>
    </subcellularLocation>
</comment>
<comment type="domain">
    <text evidence="1">The SBP-type zinc finger is required for the binding to DNA.</text>
</comment>